<evidence type="ECO:0000255" key="1">
    <source>
        <dbReference type="HAMAP-Rule" id="MF_00156"/>
    </source>
</evidence>
<evidence type="ECO:0000256" key="2">
    <source>
        <dbReference type="SAM" id="MobiDB-lite"/>
    </source>
</evidence>
<sequence>MTAAHDRSENQPGRPGGETTAPYGSAPRRRRVRTRHLLELKQRGEAWPMLTSYDMYTARIFDEAGIPVLLVGDSAANNVYGYDTTVPVTVEELIPLVRAVTRGARSALVVADLPFGSYEASPEQALATAVRFMKEGGAHAVKLEGGRPFARHVEALVNAGIPVMGHIGFTPQSEHTLGGYRVQGRGEQAEELAADARALQDAGAFAVVLEMVSSDSAKRVTAELTIPTVGIGAGPECDAQVLVWTDMAGMNTGRTARFVKRYADLGGTLARAAQEFADEVRGGAFPAPEHSFE</sequence>
<organism>
    <name type="scientific">Saccharopolyspora erythraea (strain ATCC 11635 / DSM 40517 / JCM 4748 / NBRC 13426 / NCIMB 8594 / NRRL 2338)</name>
    <dbReference type="NCBI Taxonomy" id="405948"/>
    <lineage>
        <taxon>Bacteria</taxon>
        <taxon>Bacillati</taxon>
        <taxon>Actinomycetota</taxon>
        <taxon>Actinomycetes</taxon>
        <taxon>Pseudonocardiales</taxon>
        <taxon>Pseudonocardiaceae</taxon>
        <taxon>Saccharopolyspora</taxon>
    </lineage>
</organism>
<name>PANB_SACEN</name>
<comment type="function">
    <text evidence="1">Catalyzes the reversible reaction in which hydroxymethyl group from 5,10-methylenetetrahydrofolate is transferred onto alpha-ketoisovalerate to form ketopantoate.</text>
</comment>
<comment type="catalytic activity">
    <reaction evidence="1">
        <text>3-methyl-2-oxobutanoate + (6R)-5,10-methylene-5,6,7,8-tetrahydrofolate + H2O = 2-dehydropantoate + (6S)-5,6,7,8-tetrahydrofolate</text>
        <dbReference type="Rhea" id="RHEA:11824"/>
        <dbReference type="ChEBI" id="CHEBI:11561"/>
        <dbReference type="ChEBI" id="CHEBI:11851"/>
        <dbReference type="ChEBI" id="CHEBI:15377"/>
        <dbReference type="ChEBI" id="CHEBI:15636"/>
        <dbReference type="ChEBI" id="CHEBI:57453"/>
        <dbReference type="EC" id="2.1.2.11"/>
    </reaction>
</comment>
<comment type="cofactor">
    <cofactor evidence="1">
        <name>Mg(2+)</name>
        <dbReference type="ChEBI" id="CHEBI:18420"/>
    </cofactor>
    <text evidence="1">Binds 1 Mg(2+) ion per subunit.</text>
</comment>
<comment type="pathway">
    <text evidence="1">Cofactor biosynthesis; (R)-pantothenate biosynthesis; (R)-pantoate from 3-methyl-2-oxobutanoate: step 1/2.</text>
</comment>
<comment type="subunit">
    <text evidence="1">Homodecamer; pentamer of dimers.</text>
</comment>
<comment type="subcellular location">
    <subcellularLocation>
        <location evidence="1">Cytoplasm</location>
    </subcellularLocation>
</comment>
<comment type="similarity">
    <text evidence="1">Belongs to the PanB family.</text>
</comment>
<gene>
    <name evidence="1" type="primary">panB</name>
    <name type="ordered locus">SACE_1604</name>
</gene>
<accession>A4FA49</accession>
<dbReference type="EC" id="2.1.2.11" evidence="1"/>
<dbReference type="EMBL" id="AM420293">
    <property type="protein sequence ID" value="CAM00924.1"/>
    <property type="molecule type" value="Genomic_DNA"/>
</dbReference>
<dbReference type="RefSeq" id="WP_009950170.1">
    <property type="nucleotide sequence ID" value="NC_009142.1"/>
</dbReference>
<dbReference type="SMR" id="A4FA49"/>
<dbReference type="STRING" id="405948.SACE_1604"/>
<dbReference type="KEGG" id="sen:SACE_1604"/>
<dbReference type="eggNOG" id="COG0413">
    <property type="taxonomic scope" value="Bacteria"/>
</dbReference>
<dbReference type="HOGENOM" id="CLU_036645_1_0_11"/>
<dbReference type="OrthoDB" id="9781789at2"/>
<dbReference type="UniPathway" id="UPA00028">
    <property type="reaction ID" value="UER00003"/>
</dbReference>
<dbReference type="Proteomes" id="UP000006728">
    <property type="component" value="Chromosome"/>
</dbReference>
<dbReference type="GO" id="GO:0005737">
    <property type="term" value="C:cytoplasm"/>
    <property type="evidence" value="ECO:0007669"/>
    <property type="project" value="UniProtKB-SubCell"/>
</dbReference>
<dbReference type="GO" id="GO:0003864">
    <property type="term" value="F:3-methyl-2-oxobutanoate hydroxymethyltransferase activity"/>
    <property type="evidence" value="ECO:0007669"/>
    <property type="project" value="UniProtKB-UniRule"/>
</dbReference>
<dbReference type="GO" id="GO:0000287">
    <property type="term" value="F:magnesium ion binding"/>
    <property type="evidence" value="ECO:0007669"/>
    <property type="project" value="TreeGrafter"/>
</dbReference>
<dbReference type="GO" id="GO:0015940">
    <property type="term" value="P:pantothenate biosynthetic process"/>
    <property type="evidence" value="ECO:0007669"/>
    <property type="project" value="UniProtKB-UniRule"/>
</dbReference>
<dbReference type="CDD" id="cd06557">
    <property type="entry name" value="KPHMT-like"/>
    <property type="match status" value="1"/>
</dbReference>
<dbReference type="FunFam" id="3.20.20.60:FF:000003">
    <property type="entry name" value="3-methyl-2-oxobutanoate hydroxymethyltransferase"/>
    <property type="match status" value="1"/>
</dbReference>
<dbReference type="Gene3D" id="3.20.20.60">
    <property type="entry name" value="Phosphoenolpyruvate-binding domains"/>
    <property type="match status" value="1"/>
</dbReference>
<dbReference type="HAMAP" id="MF_00156">
    <property type="entry name" value="PanB"/>
    <property type="match status" value="1"/>
</dbReference>
<dbReference type="InterPro" id="IPR003700">
    <property type="entry name" value="Pantoate_hydroxy_MeTrfase"/>
</dbReference>
<dbReference type="InterPro" id="IPR015813">
    <property type="entry name" value="Pyrv/PenolPyrv_kinase-like_dom"/>
</dbReference>
<dbReference type="InterPro" id="IPR040442">
    <property type="entry name" value="Pyrv_kinase-like_dom_sf"/>
</dbReference>
<dbReference type="NCBIfam" id="TIGR00222">
    <property type="entry name" value="panB"/>
    <property type="match status" value="1"/>
</dbReference>
<dbReference type="NCBIfam" id="NF001452">
    <property type="entry name" value="PRK00311.1"/>
    <property type="match status" value="1"/>
</dbReference>
<dbReference type="PANTHER" id="PTHR20881">
    <property type="entry name" value="3-METHYL-2-OXOBUTANOATE HYDROXYMETHYLTRANSFERASE"/>
    <property type="match status" value="1"/>
</dbReference>
<dbReference type="PANTHER" id="PTHR20881:SF0">
    <property type="entry name" value="3-METHYL-2-OXOBUTANOATE HYDROXYMETHYLTRANSFERASE"/>
    <property type="match status" value="1"/>
</dbReference>
<dbReference type="Pfam" id="PF02548">
    <property type="entry name" value="Pantoate_transf"/>
    <property type="match status" value="1"/>
</dbReference>
<dbReference type="PIRSF" id="PIRSF000388">
    <property type="entry name" value="Pantoate_hydroxy_MeTrfase"/>
    <property type="match status" value="1"/>
</dbReference>
<dbReference type="SUPFAM" id="SSF51621">
    <property type="entry name" value="Phosphoenolpyruvate/pyruvate domain"/>
    <property type="match status" value="1"/>
</dbReference>
<protein>
    <recommendedName>
        <fullName evidence="1">3-methyl-2-oxobutanoate hydroxymethyltransferase</fullName>
        <ecNumber evidence="1">2.1.2.11</ecNumber>
    </recommendedName>
    <alternativeName>
        <fullName evidence="1">Ketopantoate hydroxymethyltransferase</fullName>
        <shortName evidence="1">KPHMT</shortName>
    </alternativeName>
</protein>
<reference key="1">
    <citation type="journal article" date="2007" name="Nat. Biotechnol.">
        <title>Complete genome sequence of the erythromycin-producing bacterium Saccharopolyspora erythraea NRRL23338.</title>
        <authorList>
            <person name="Oliynyk M."/>
            <person name="Samborskyy M."/>
            <person name="Lester J.B."/>
            <person name="Mironenko T."/>
            <person name="Scott N."/>
            <person name="Dickens S."/>
            <person name="Haydock S.F."/>
            <person name="Leadlay P.F."/>
        </authorList>
    </citation>
    <scope>NUCLEOTIDE SEQUENCE [LARGE SCALE GENOMIC DNA]</scope>
    <source>
        <strain>ATCC 11635 / DSM 40517 / JCM 4748 / NBRC 13426 / NCIMB 8594 / NRRL 2338</strain>
    </source>
</reference>
<feature type="chain" id="PRO_0000297363" description="3-methyl-2-oxobutanoate hydroxymethyltransferase">
    <location>
        <begin position="1"/>
        <end position="293"/>
    </location>
</feature>
<feature type="region of interest" description="Disordered" evidence="2">
    <location>
        <begin position="1"/>
        <end position="29"/>
    </location>
</feature>
<feature type="active site" description="Proton acceptor" evidence="1">
    <location>
        <position position="210"/>
    </location>
</feature>
<feature type="binding site" evidence="1">
    <location>
        <begin position="73"/>
        <end position="74"/>
    </location>
    <ligand>
        <name>3-methyl-2-oxobutanoate</name>
        <dbReference type="ChEBI" id="CHEBI:11851"/>
    </ligand>
</feature>
<feature type="binding site" evidence="1">
    <location>
        <position position="73"/>
    </location>
    <ligand>
        <name>Mg(2+)</name>
        <dbReference type="ChEBI" id="CHEBI:18420"/>
    </ligand>
</feature>
<feature type="binding site" evidence="1">
    <location>
        <position position="112"/>
    </location>
    <ligand>
        <name>3-methyl-2-oxobutanoate</name>
        <dbReference type="ChEBI" id="CHEBI:11851"/>
    </ligand>
</feature>
<feature type="binding site" evidence="1">
    <location>
        <position position="112"/>
    </location>
    <ligand>
        <name>Mg(2+)</name>
        <dbReference type="ChEBI" id="CHEBI:18420"/>
    </ligand>
</feature>
<feature type="binding site" evidence="1">
    <location>
        <position position="142"/>
    </location>
    <ligand>
        <name>3-methyl-2-oxobutanoate</name>
        <dbReference type="ChEBI" id="CHEBI:11851"/>
    </ligand>
</feature>
<feature type="binding site" evidence="1">
    <location>
        <position position="144"/>
    </location>
    <ligand>
        <name>Mg(2+)</name>
        <dbReference type="ChEBI" id="CHEBI:18420"/>
    </ligand>
</feature>
<keyword id="KW-0963">Cytoplasm</keyword>
<keyword id="KW-0460">Magnesium</keyword>
<keyword id="KW-0479">Metal-binding</keyword>
<keyword id="KW-0566">Pantothenate biosynthesis</keyword>
<keyword id="KW-1185">Reference proteome</keyword>
<keyword id="KW-0808">Transferase</keyword>
<proteinExistence type="inferred from homology"/>